<name>GCSPA_LISMF</name>
<protein>
    <recommendedName>
        <fullName evidence="1">Probable glycine dehydrogenase (decarboxylating) subunit 1</fullName>
        <ecNumber evidence="1">1.4.4.2</ecNumber>
    </recommendedName>
    <alternativeName>
        <fullName evidence="1">Glycine cleavage system P-protein subunit 1</fullName>
    </alternativeName>
    <alternativeName>
        <fullName evidence="1">Glycine decarboxylase subunit 1</fullName>
    </alternativeName>
    <alternativeName>
        <fullName evidence="1">Glycine dehydrogenase (aminomethyl-transferring) subunit 1</fullName>
    </alternativeName>
</protein>
<dbReference type="EC" id="1.4.4.2" evidence="1"/>
<dbReference type="EMBL" id="AE017262">
    <property type="protein sequence ID" value="AAT04141.1"/>
    <property type="molecule type" value="Genomic_DNA"/>
</dbReference>
<dbReference type="RefSeq" id="WP_003726157.1">
    <property type="nucleotide sequence ID" value="NC_002973.6"/>
</dbReference>
<dbReference type="SMR" id="Q71ZX3"/>
<dbReference type="KEGG" id="lmf:LMOf2365_1366"/>
<dbReference type="HOGENOM" id="CLU_004620_0_2_9"/>
<dbReference type="GO" id="GO:0004375">
    <property type="term" value="F:glycine dehydrogenase (decarboxylating) activity"/>
    <property type="evidence" value="ECO:0007669"/>
    <property type="project" value="UniProtKB-EC"/>
</dbReference>
<dbReference type="GO" id="GO:0019464">
    <property type="term" value="P:glycine decarboxylation via glycine cleavage system"/>
    <property type="evidence" value="ECO:0007669"/>
    <property type="project" value="UniProtKB-UniRule"/>
</dbReference>
<dbReference type="GO" id="GO:0009116">
    <property type="term" value="P:nucleoside metabolic process"/>
    <property type="evidence" value="ECO:0007669"/>
    <property type="project" value="InterPro"/>
</dbReference>
<dbReference type="CDD" id="cd00613">
    <property type="entry name" value="GDC-P"/>
    <property type="match status" value="1"/>
</dbReference>
<dbReference type="FunFam" id="3.40.640.10:FF:000113">
    <property type="entry name" value="Probable glycine dehydrogenase (decarboxylating) subunit 1"/>
    <property type="match status" value="1"/>
</dbReference>
<dbReference type="FunFam" id="3.90.1150.10:FF:000116">
    <property type="entry name" value="Probable glycine dehydrogenase (decarboxylating) subunit 1"/>
    <property type="match status" value="1"/>
</dbReference>
<dbReference type="Gene3D" id="3.90.1150.10">
    <property type="entry name" value="Aspartate Aminotransferase, domain 1"/>
    <property type="match status" value="1"/>
</dbReference>
<dbReference type="Gene3D" id="3.40.640.10">
    <property type="entry name" value="Type I PLP-dependent aspartate aminotransferase-like (Major domain)"/>
    <property type="match status" value="1"/>
</dbReference>
<dbReference type="HAMAP" id="MF_00712">
    <property type="entry name" value="GcvPA"/>
    <property type="match status" value="1"/>
</dbReference>
<dbReference type="InterPro" id="IPR023010">
    <property type="entry name" value="GcvPA"/>
</dbReference>
<dbReference type="InterPro" id="IPR049315">
    <property type="entry name" value="GDC-P_N"/>
</dbReference>
<dbReference type="InterPro" id="IPR020581">
    <property type="entry name" value="GDC_P"/>
</dbReference>
<dbReference type="InterPro" id="IPR015424">
    <property type="entry name" value="PyrdxlP-dep_Trfase"/>
</dbReference>
<dbReference type="InterPro" id="IPR015421">
    <property type="entry name" value="PyrdxlP-dep_Trfase_major"/>
</dbReference>
<dbReference type="InterPro" id="IPR015422">
    <property type="entry name" value="PyrdxlP-dep_Trfase_small"/>
</dbReference>
<dbReference type="NCBIfam" id="NF001696">
    <property type="entry name" value="PRK00451.1"/>
    <property type="match status" value="1"/>
</dbReference>
<dbReference type="PANTHER" id="PTHR42806">
    <property type="entry name" value="GLYCINE CLEAVAGE SYSTEM P-PROTEIN"/>
    <property type="match status" value="1"/>
</dbReference>
<dbReference type="PANTHER" id="PTHR42806:SF1">
    <property type="entry name" value="GLYCINE DEHYDROGENASE (DECARBOXYLATING)"/>
    <property type="match status" value="1"/>
</dbReference>
<dbReference type="Pfam" id="PF02347">
    <property type="entry name" value="GDC-P"/>
    <property type="match status" value="1"/>
</dbReference>
<dbReference type="PIRSF" id="PIRSF006815">
    <property type="entry name" value="GcvPA"/>
    <property type="match status" value="1"/>
</dbReference>
<dbReference type="SUPFAM" id="SSF53383">
    <property type="entry name" value="PLP-dependent transferases"/>
    <property type="match status" value="1"/>
</dbReference>
<organism>
    <name type="scientific">Listeria monocytogenes serotype 4b (strain F2365)</name>
    <dbReference type="NCBI Taxonomy" id="265669"/>
    <lineage>
        <taxon>Bacteria</taxon>
        <taxon>Bacillati</taxon>
        <taxon>Bacillota</taxon>
        <taxon>Bacilli</taxon>
        <taxon>Bacillales</taxon>
        <taxon>Listeriaceae</taxon>
        <taxon>Listeria</taxon>
    </lineage>
</organism>
<proteinExistence type="inferred from homology"/>
<accession>Q71ZX3</accession>
<gene>
    <name evidence="1" type="primary">gcvPA</name>
    <name type="synonym">gcvP1</name>
    <name type="ordered locus">LMOf2365_1366</name>
</gene>
<feature type="chain" id="PRO_0000166966" description="Probable glycine dehydrogenase (decarboxylating) subunit 1">
    <location>
        <begin position="1"/>
        <end position="448"/>
    </location>
</feature>
<reference key="1">
    <citation type="journal article" date="2004" name="Nucleic Acids Res.">
        <title>Whole genome comparisons of serotype 4b and 1/2a strains of the food-borne pathogen Listeria monocytogenes reveal new insights into the core genome components of this species.</title>
        <authorList>
            <person name="Nelson K.E."/>
            <person name="Fouts D.E."/>
            <person name="Mongodin E.F."/>
            <person name="Ravel J."/>
            <person name="DeBoy R.T."/>
            <person name="Kolonay J.F."/>
            <person name="Rasko D.A."/>
            <person name="Angiuoli S.V."/>
            <person name="Gill S.R."/>
            <person name="Paulsen I.T."/>
            <person name="Peterson J.D."/>
            <person name="White O."/>
            <person name="Nelson W.C."/>
            <person name="Nierman W.C."/>
            <person name="Beanan M.J."/>
            <person name="Brinkac L.M."/>
            <person name="Daugherty S.C."/>
            <person name="Dodson R.J."/>
            <person name="Durkin A.S."/>
            <person name="Madupu R."/>
            <person name="Haft D.H."/>
            <person name="Selengut J."/>
            <person name="Van Aken S.E."/>
            <person name="Khouri H.M."/>
            <person name="Fedorova N."/>
            <person name="Forberger H.A."/>
            <person name="Tran B."/>
            <person name="Kathariou S."/>
            <person name="Wonderling L.D."/>
            <person name="Uhlich G.A."/>
            <person name="Bayles D.O."/>
            <person name="Luchansky J.B."/>
            <person name="Fraser C.M."/>
        </authorList>
    </citation>
    <scope>NUCLEOTIDE SEQUENCE [LARGE SCALE GENOMIC DNA]</scope>
    <source>
        <strain>F2365</strain>
    </source>
</reference>
<keyword id="KW-0560">Oxidoreductase</keyword>
<evidence type="ECO:0000255" key="1">
    <source>
        <dbReference type="HAMAP-Rule" id="MF_00712"/>
    </source>
</evidence>
<comment type="function">
    <text evidence="1">The glycine cleavage system catalyzes the degradation of glycine. The P protein binds the alpha-amino group of glycine through its pyridoxal phosphate cofactor; CO(2) is released and the remaining methylamine moiety is then transferred to the lipoamide cofactor of the H protein.</text>
</comment>
<comment type="catalytic activity">
    <reaction evidence="1">
        <text>N(6)-[(R)-lipoyl]-L-lysyl-[glycine-cleavage complex H protein] + glycine + H(+) = N(6)-[(R)-S(8)-aminomethyldihydrolipoyl]-L-lysyl-[glycine-cleavage complex H protein] + CO2</text>
        <dbReference type="Rhea" id="RHEA:24304"/>
        <dbReference type="Rhea" id="RHEA-COMP:10494"/>
        <dbReference type="Rhea" id="RHEA-COMP:10495"/>
        <dbReference type="ChEBI" id="CHEBI:15378"/>
        <dbReference type="ChEBI" id="CHEBI:16526"/>
        <dbReference type="ChEBI" id="CHEBI:57305"/>
        <dbReference type="ChEBI" id="CHEBI:83099"/>
        <dbReference type="ChEBI" id="CHEBI:83143"/>
        <dbReference type="EC" id="1.4.4.2"/>
    </reaction>
</comment>
<comment type="subunit">
    <text evidence="1">The glycine cleavage system is composed of four proteins: P, T, L and H. In this organism, the P 'protein' is a heterodimer of two subunits.</text>
</comment>
<comment type="similarity">
    <text evidence="1">Belongs to the GcvP family. N-terminal subunit subfamily.</text>
</comment>
<sequence>MAKHRYLPMTEQDEKEMLDVIGVKSIDDLFQDIPEKIRFKRDYDLKPAKSEPALLRELSKLASKNANTTEYASFLGAGVYSHYIPTVVDHVISRSEFYTAYTPYQPEISQGELQAIFEFQTMIAELTGMDLANSSMYDGGTALAEAAMLASGHTKRKKILISGAVHPESSNVLKTYATGQHIEVEVIPELDGKTDIEALKKALSDDIAGFVVQYPNFYGQVEPLAELEKLVHENNSLLLVSSNPLSLGLLTPPGEFGADIVVGDSQVFGIPESFGGPHCGFFAVTNKLMRKVPGRLVGETVDENGKRGYVLTLQAREQHIRRDKATSNICSNQALNALASSVAMATLGKTGLVEMAKQNLDKSHYAKQKFREKGFEVLFSDGFFNEFVVKLSKPIKEVNESLLDEGIIGGYDLGFYEEKYENHMLVAVTEMRTKEEIDAFVASLEGAK</sequence>